<comment type="catalytic activity">
    <reaction evidence="1">
        <text>tRNA(His) + L-histidine + ATP = L-histidyl-tRNA(His) + AMP + diphosphate + H(+)</text>
        <dbReference type="Rhea" id="RHEA:17313"/>
        <dbReference type="Rhea" id="RHEA-COMP:9665"/>
        <dbReference type="Rhea" id="RHEA-COMP:9689"/>
        <dbReference type="ChEBI" id="CHEBI:15378"/>
        <dbReference type="ChEBI" id="CHEBI:30616"/>
        <dbReference type="ChEBI" id="CHEBI:33019"/>
        <dbReference type="ChEBI" id="CHEBI:57595"/>
        <dbReference type="ChEBI" id="CHEBI:78442"/>
        <dbReference type="ChEBI" id="CHEBI:78527"/>
        <dbReference type="ChEBI" id="CHEBI:456215"/>
        <dbReference type="EC" id="6.1.1.21"/>
    </reaction>
</comment>
<comment type="subunit">
    <text evidence="1">Homodimer.</text>
</comment>
<comment type="subcellular location">
    <subcellularLocation>
        <location evidence="1">Cytoplasm</location>
    </subcellularLocation>
</comment>
<comment type="similarity">
    <text evidence="1">Belongs to the class-II aminoacyl-tRNA synthetase family.</text>
</comment>
<proteinExistence type="inferred from homology"/>
<reference key="1">
    <citation type="journal article" date="2004" name="Proc. Natl. Acad. Sci. U.S.A.">
        <title>Insights into the evolution of Yersinia pestis through whole-genome comparison with Yersinia pseudotuberculosis.</title>
        <authorList>
            <person name="Chain P.S.G."/>
            <person name="Carniel E."/>
            <person name="Larimer F.W."/>
            <person name="Lamerdin J."/>
            <person name="Stoutland P.O."/>
            <person name="Regala W.M."/>
            <person name="Georgescu A.M."/>
            <person name="Vergez L.M."/>
            <person name="Land M.L."/>
            <person name="Motin V.L."/>
            <person name="Brubaker R.R."/>
            <person name="Fowler J."/>
            <person name="Hinnebusch J."/>
            <person name="Marceau M."/>
            <person name="Medigue C."/>
            <person name="Simonet M."/>
            <person name="Chenal-Francisque V."/>
            <person name="Souza B."/>
            <person name="Dacheux D."/>
            <person name="Elliott J.M."/>
            <person name="Derbise A."/>
            <person name="Hauser L.J."/>
            <person name="Garcia E."/>
        </authorList>
    </citation>
    <scope>NUCLEOTIDE SEQUENCE [LARGE SCALE GENOMIC DNA]</scope>
    <source>
        <strain>IP32953</strain>
    </source>
</reference>
<gene>
    <name evidence="1" type="primary">hisS</name>
    <name type="ordered locus">YPTB2840</name>
</gene>
<evidence type="ECO:0000255" key="1">
    <source>
        <dbReference type="HAMAP-Rule" id="MF_00127"/>
    </source>
</evidence>
<keyword id="KW-0030">Aminoacyl-tRNA synthetase</keyword>
<keyword id="KW-0067">ATP-binding</keyword>
<keyword id="KW-0963">Cytoplasm</keyword>
<keyword id="KW-0436">Ligase</keyword>
<keyword id="KW-0547">Nucleotide-binding</keyword>
<keyword id="KW-0648">Protein biosynthesis</keyword>
<dbReference type="EC" id="6.1.1.21" evidence="1"/>
<dbReference type="EMBL" id="BX936398">
    <property type="protein sequence ID" value="CAH22078.1"/>
    <property type="molecule type" value="Genomic_DNA"/>
</dbReference>
<dbReference type="RefSeq" id="WP_002209816.1">
    <property type="nucleotide sequence ID" value="NZ_CP009712.1"/>
</dbReference>
<dbReference type="SMR" id="Q668A0"/>
<dbReference type="GeneID" id="57975836"/>
<dbReference type="KEGG" id="ypo:BZ17_3790"/>
<dbReference type="KEGG" id="yps:YPTB2840"/>
<dbReference type="PATRIC" id="fig|273123.14.peg.3976"/>
<dbReference type="Proteomes" id="UP000001011">
    <property type="component" value="Chromosome"/>
</dbReference>
<dbReference type="GO" id="GO:0005737">
    <property type="term" value="C:cytoplasm"/>
    <property type="evidence" value="ECO:0007669"/>
    <property type="project" value="UniProtKB-SubCell"/>
</dbReference>
<dbReference type="GO" id="GO:0005524">
    <property type="term" value="F:ATP binding"/>
    <property type="evidence" value="ECO:0007669"/>
    <property type="project" value="UniProtKB-UniRule"/>
</dbReference>
<dbReference type="GO" id="GO:0004821">
    <property type="term" value="F:histidine-tRNA ligase activity"/>
    <property type="evidence" value="ECO:0007669"/>
    <property type="project" value="UniProtKB-UniRule"/>
</dbReference>
<dbReference type="GO" id="GO:0006427">
    <property type="term" value="P:histidyl-tRNA aminoacylation"/>
    <property type="evidence" value="ECO:0007669"/>
    <property type="project" value="UniProtKB-UniRule"/>
</dbReference>
<dbReference type="CDD" id="cd00773">
    <property type="entry name" value="HisRS-like_core"/>
    <property type="match status" value="1"/>
</dbReference>
<dbReference type="CDD" id="cd00859">
    <property type="entry name" value="HisRS_anticodon"/>
    <property type="match status" value="1"/>
</dbReference>
<dbReference type="FunFam" id="3.30.930.10:FF:000005">
    <property type="entry name" value="Histidine--tRNA ligase"/>
    <property type="match status" value="1"/>
</dbReference>
<dbReference type="FunFam" id="3.40.50.800:FF:000007">
    <property type="entry name" value="Histidine--tRNA ligase"/>
    <property type="match status" value="1"/>
</dbReference>
<dbReference type="Gene3D" id="3.40.50.800">
    <property type="entry name" value="Anticodon-binding domain"/>
    <property type="match status" value="1"/>
</dbReference>
<dbReference type="Gene3D" id="3.30.930.10">
    <property type="entry name" value="Bira Bifunctional Protein, Domain 2"/>
    <property type="match status" value="1"/>
</dbReference>
<dbReference type="HAMAP" id="MF_00127">
    <property type="entry name" value="His_tRNA_synth"/>
    <property type="match status" value="1"/>
</dbReference>
<dbReference type="InterPro" id="IPR006195">
    <property type="entry name" value="aa-tRNA-synth_II"/>
</dbReference>
<dbReference type="InterPro" id="IPR045864">
    <property type="entry name" value="aa-tRNA-synth_II/BPL/LPL"/>
</dbReference>
<dbReference type="InterPro" id="IPR004154">
    <property type="entry name" value="Anticodon-bd"/>
</dbReference>
<dbReference type="InterPro" id="IPR036621">
    <property type="entry name" value="Anticodon-bd_dom_sf"/>
</dbReference>
<dbReference type="InterPro" id="IPR015807">
    <property type="entry name" value="His-tRNA-ligase"/>
</dbReference>
<dbReference type="InterPro" id="IPR041715">
    <property type="entry name" value="HisRS-like_core"/>
</dbReference>
<dbReference type="InterPro" id="IPR004516">
    <property type="entry name" value="HisRS/HisZ"/>
</dbReference>
<dbReference type="InterPro" id="IPR033656">
    <property type="entry name" value="HisRS_anticodon"/>
</dbReference>
<dbReference type="NCBIfam" id="TIGR00442">
    <property type="entry name" value="hisS"/>
    <property type="match status" value="1"/>
</dbReference>
<dbReference type="PANTHER" id="PTHR43707:SF1">
    <property type="entry name" value="HISTIDINE--TRNA LIGASE, MITOCHONDRIAL-RELATED"/>
    <property type="match status" value="1"/>
</dbReference>
<dbReference type="PANTHER" id="PTHR43707">
    <property type="entry name" value="HISTIDYL-TRNA SYNTHETASE"/>
    <property type="match status" value="1"/>
</dbReference>
<dbReference type="Pfam" id="PF03129">
    <property type="entry name" value="HGTP_anticodon"/>
    <property type="match status" value="1"/>
</dbReference>
<dbReference type="Pfam" id="PF13393">
    <property type="entry name" value="tRNA-synt_His"/>
    <property type="match status" value="1"/>
</dbReference>
<dbReference type="PIRSF" id="PIRSF001549">
    <property type="entry name" value="His-tRNA_synth"/>
    <property type="match status" value="1"/>
</dbReference>
<dbReference type="SUPFAM" id="SSF52954">
    <property type="entry name" value="Class II aaRS ABD-related"/>
    <property type="match status" value="1"/>
</dbReference>
<dbReference type="SUPFAM" id="SSF55681">
    <property type="entry name" value="Class II aaRS and biotin synthetases"/>
    <property type="match status" value="1"/>
</dbReference>
<dbReference type="PROSITE" id="PS50862">
    <property type="entry name" value="AA_TRNA_LIGASE_II"/>
    <property type="match status" value="1"/>
</dbReference>
<sequence>MAKNIQAIRGMNDYLPADTAIWQRIESILKQVLSGYGYSEIRMPIVEQTPLFKRAIGEVTDVVEKEMYTFDDRNGESLTLRPEGTAGCVRAGIEHGLLYNQEQRLWYIGPMFRYERPQKGRYRQFHQLGAEVFGLPGPDIDAELILLTARWWRALGIFEHVKLELNSIGSLAARADYREALVAFLEQHVEVLDEDCKRRMYSNPLRVLDSKNPDVQQLLDDAPKLSDYLDEESKQHFAGLCELLDKASIPYTVNERLVRGLDYYNRTVFEWVTHSLGAQGTVCAGGRYDGLVEQLGGRATPAVGFAMGLERLVLLVQAVNADFQVPATVDAYVISSGEGAQSAAMLLAESLRDALPTLKIMTNYGGGNVKKQFTRADKWGARVALMLGESEVAAQQVVVKDLRNGEQETLAQADVAARLALMLG</sequence>
<protein>
    <recommendedName>
        <fullName evidence="1">Histidine--tRNA ligase</fullName>
        <ecNumber evidence="1">6.1.1.21</ecNumber>
    </recommendedName>
    <alternativeName>
        <fullName evidence="1">Histidyl-tRNA synthetase</fullName>
        <shortName evidence="1">HisRS</shortName>
    </alternativeName>
</protein>
<feature type="chain" id="PRO_0000136306" description="Histidine--tRNA ligase">
    <location>
        <begin position="1"/>
        <end position="424"/>
    </location>
</feature>
<name>SYH_YERPS</name>
<organism>
    <name type="scientific">Yersinia pseudotuberculosis serotype I (strain IP32953)</name>
    <dbReference type="NCBI Taxonomy" id="273123"/>
    <lineage>
        <taxon>Bacteria</taxon>
        <taxon>Pseudomonadati</taxon>
        <taxon>Pseudomonadota</taxon>
        <taxon>Gammaproteobacteria</taxon>
        <taxon>Enterobacterales</taxon>
        <taxon>Yersiniaceae</taxon>
        <taxon>Yersinia</taxon>
    </lineage>
</organism>
<accession>Q668A0</accession>